<name>CARB_SCHPO</name>
<proteinExistence type="inferred from homology"/>
<protein>
    <recommendedName>
        <fullName evidence="9">Carbamoyl phosphate synthase arginine-specific large chain, mitochondrial</fullName>
        <shortName>CPS</shortName>
        <shortName>CPSase</shortName>
        <ecNumber evidence="2">6.3.4.16</ecNumber>
        <ecNumber evidence="3">6.3.5.5</ecNumber>
    </recommendedName>
    <alternativeName>
        <fullName>Ammonium-dependent carbamoyl phosphate synthetase</fullName>
    </alternativeName>
    <alternativeName>
        <fullName>Arginine-specific carbamoyl phosphate synthetase, ammonia chain</fullName>
    </alternativeName>
    <alternativeName>
        <fullName>Glutamine-dependent carbamoyl phosphate synthetase</fullName>
    </alternativeName>
</protein>
<feature type="chain" id="PRO_0000145089" description="Carbamoyl phosphate synthase arginine-specific large chain, mitochondrial">
    <location>
        <begin position="1"/>
        <end position="1160"/>
    </location>
</feature>
<feature type="domain" description="ATP-grasp 1" evidence="4">
    <location>
        <begin position="212"/>
        <end position="404"/>
    </location>
</feature>
<feature type="domain" description="ATP-grasp 2" evidence="4">
    <location>
        <begin position="748"/>
        <end position="946"/>
    </location>
</feature>
<feature type="domain" description="MGS-like" evidence="5">
    <location>
        <begin position="1014"/>
        <end position="1160"/>
    </location>
</feature>
<feature type="region of interest" description="Carboxyphosphate synthetic domain" evidence="1">
    <location>
        <begin position="81"/>
        <end position="478"/>
    </location>
</feature>
<feature type="region of interest" description="Oligomerization domain" evidence="1">
    <location>
        <begin position="479"/>
        <end position="623"/>
    </location>
</feature>
<feature type="region of interest" description="Carbamoyl phosphate synthetic domain" evidence="1">
    <location>
        <begin position="624"/>
        <end position="1012"/>
    </location>
</feature>
<feature type="region of interest" description="Allosteric domain" evidence="1">
    <location>
        <begin position="1013"/>
        <end position="1144"/>
    </location>
</feature>
<feature type="binding site" evidence="1">
    <location>
        <position position="208"/>
    </location>
    <ligand>
        <name>ATP</name>
        <dbReference type="ChEBI" id="CHEBI:30616"/>
        <label>1</label>
    </ligand>
</feature>
<feature type="binding site" evidence="1">
    <location>
        <position position="248"/>
    </location>
    <ligand>
        <name>ATP</name>
        <dbReference type="ChEBI" id="CHEBI:30616"/>
        <label>1</label>
    </ligand>
</feature>
<feature type="binding site" evidence="1">
    <location>
        <position position="254"/>
    </location>
    <ligand>
        <name>ATP</name>
        <dbReference type="ChEBI" id="CHEBI:30616"/>
        <label>1</label>
    </ligand>
</feature>
<feature type="binding site" evidence="1">
    <location>
        <position position="255"/>
    </location>
    <ligand>
        <name>ATP</name>
        <dbReference type="ChEBI" id="CHEBI:30616"/>
        <label>1</label>
    </ligand>
</feature>
<feature type="binding site" evidence="1">
    <location>
        <position position="285"/>
    </location>
    <ligand>
        <name>ATP</name>
        <dbReference type="ChEBI" id="CHEBI:30616"/>
        <label>1</label>
    </ligand>
</feature>
<feature type="binding site" evidence="1">
    <location>
        <position position="287"/>
    </location>
    <ligand>
        <name>ATP</name>
        <dbReference type="ChEBI" id="CHEBI:30616"/>
        <label>1</label>
    </ligand>
</feature>
<feature type="binding site" evidence="1">
    <location>
        <position position="292"/>
    </location>
    <ligand>
        <name>ATP</name>
        <dbReference type="ChEBI" id="CHEBI:30616"/>
        <label>1</label>
    </ligand>
</feature>
<feature type="binding site" evidence="1">
    <location>
        <position position="318"/>
    </location>
    <ligand>
        <name>ATP</name>
        <dbReference type="ChEBI" id="CHEBI:30616"/>
        <label>1</label>
    </ligand>
</feature>
<feature type="binding site" evidence="1">
    <location>
        <position position="319"/>
    </location>
    <ligand>
        <name>ATP</name>
        <dbReference type="ChEBI" id="CHEBI:30616"/>
        <label>1</label>
    </ligand>
</feature>
<feature type="binding site" evidence="1">
    <location>
        <position position="320"/>
    </location>
    <ligand>
        <name>ATP</name>
        <dbReference type="ChEBI" id="CHEBI:30616"/>
        <label>1</label>
    </ligand>
</feature>
<feature type="binding site" evidence="1">
    <location>
        <position position="361"/>
    </location>
    <ligand>
        <name>ATP</name>
        <dbReference type="ChEBI" id="CHEBI:30616"/>
        <label>1</label>
    </ligand>
</feature>
<feature type="binding site" evidence="4">
    <location>
        <position position="361"/>
    </location>
    <ligand>
        <name>Mg(2+)</name>
        <dbReference type="ChEBI" id="CHEBI:18420"/>
        <label>1</label>
    </ligand>
</feature>
<feature type="binding site" evidence="4">
    <location>
        <position position="361"/>
    </location>
    <ligand>
        <name>Mn(2+)</name>
        <dbReference type="ChEBI" id="CHEBI:29035"/>
        <label>1</label>
    </ligand>
</feature>
<feature type="binding site" evidence="1">
    <location>
        <position position="375"/>
    </location>
    <ligand>
        <name>ATP</name>
        <dbReference type="ChEBI" id="CHEBI:30616"/>
        <label>1</label>
    </ligand>
</feature>
<feature type="binding site" evidence="4">
    <location>
        <position position="375"/>
    </location>
    <ligand>
        <name>Mg(2+)</name>
        <dbReference type="ChEBI" id="CHEBI:18420"/>
        <label>1</label>
    </ligand>
</feature>
<feature type="binding site" evidence="4">
    <location>
        <position position="375"/>
    </location>
    <ligand>
        <name>Mg(2+)</name>
        <dbReference type="ChEBI" id="CHEBI:18420"/>
        <label>2</label>
    </ligand>
</feature>
<feature type="binding site" evidence="4">
    <location>
        <position position="375"/>
    </location>
    <ligand>
        <name>Mn(2+)</name>
        <dbReference type="ChEBI" id="CHEBI:29035"/>
        <label>1</label>
    </ligand>
</feature>
<feature type="binding site" evidence="4">
    <location>
        <position position="375"/>
    </location>
    <ligand>
        <name>Mn(2+)</name>
        <dbReference type="ChEBI" id="CHEBI:29035"/>
        <label>2</label>
    </ligand>
</feature>
<feature type="binding site" evidence="4">
    <location>
        <position position="377"/>
    </location>
    <ligand>
        <name>Mg(2+)</name>
        <dbReference type="ChEBI" id="CHEBI:18420"/>
        <label>2</label>
    </ligand>
</feature>
<feature type="binding site" evidence="4">
    <location>
        <position position="377"/>
    </location>
    <ligand>
        <name>Mn(2+)</name>
        <dbReference type="ChEBI" id="CHEBI:29035"/>
        <label>2</label>
    </ligand>
</feature>
<feature type="binding site" evidence="1">
    <location>
        <position position="784"/>
    </location>
    <ligand>
        <name>ATP</name>
        <dbReference type="ChEBI" id="CHEBI:30616"/>
        <label>2</label>
    </ligand>
</feature>
<feature type="binding site" evidence="1">
    <location>
        <position position="823"/>
    </location>
    <ligand>
        <name>ATP</name>
        <dbReference type="ChEBI" id="CHEBI:30616"/>
        <label>2</label>
    </ligand>
</feature>
<feature type="binding site" evidence="1">
    <location>
        <position position="825"/>
    </location>
    <ligand>
        <name>ATP</name>
        <dbReference type="ChEBI" id="CHEBI:30616"/>
        <label>2</label>
    </ligand>
</feature>
<feature type="binding site" evidence="1">
    <location>
        <position position="830"/>
    </location>
    <ligand>
        <name>ATP</name>
        <dbReference type="ChEBI" id="CHEBI:30616"/>
        <label>2</label>
    </ligand>
</feature>
<feature type="binding site" evidence="1">
    <location>
        <position position="855"/>
    </location>
    <ligand>
        <name>ATP</name>
        <dbReference type="ChEBI" id="CHEBI:30616"/>
        <label>2</label>
    </ligand>
</feature>
<feature type="binding site" evidence="1">
    <location>
        <position position="856"/>
    </location>
    <ligand>
        <name>ATP</name>
        <dbReference type="ChEBI" id="CHEBI:30616"/>
        <label>2</label>
    </ligand>
</feature>
<feature type="binding site" evidence="1">
    <location>
        <position position="857"/>
    </location>
    <ligand>
        <name>ATP</name>
        <dbReference type="ChEBI" id="CHEBI:30616"/>
        <label>2</label>
    </ligand>
</feature>
<feature type="binding site" evidence="1">
    <location>
        <position position="858"/>
    </location>
    <ligand>
        <name>ATP</name>
        <dbReference type="ChEBI" id="CHEBI:30616"/>
        <label>2</label>
    </ligand>
</feature>
<feature type="binding site" evidence="1">
    <location>
        <position position="898"/>
    </location>
    <ligand>
        <name>ATP</name>
        <dbReference type="ChEBI" id="CHEBI:30616"/>
        <label>2</label>
    </ligand>
</feature>
<feature type="binding site" evidence="4">
    <location>
        <position position="898"/>
    </location>
    <ligand>
        <name>Mg(2+)</name>
        <dbReference type="ChEBI" id="CHEBI:18420"/>
        <label>3</label>
    </ligand>
</feature>
<feature type="binding site" evidence="4">
    <location>
        <position position="898"/>
    </location>
    <ligand>
        <name>Mn(2+)</name>
        <dbReference type="ChEBI" id="CHEBI:29035"/>
        <label>3</label>
    </ligand>
</feature>
<feature type="binding site" evidence="1">
    <location>
        <position position="917"/>
    </location>
    <ligand>
        <name>ATP</name>
        <dbReference type="ChEBI" id="CHEBI:30616"/>
        <label>2</label>
    </ligand>
</feature>
<feature type="binding site" evidence="4">
    <location>
        <position position="917"/>
    </location>
    <ligand>
        <name>Mg(2+)</name>
        <dbReference type="ChEBI" id="CHEBI:18420"/>
        <label>3</label>
    </ligand>
</feature>
<feature type="binding site" evidence="4">
    <location>
        <position position="917"/>
    </location>
    <ligand>
        <name>Mg(2+)</name>
        <dbReference type="ChEBI" id="CHEBI:18420"/>
        <label>4</label>
    </ligand>
</feature>
<feature type="binding site" evidence="4">
    <location>
        <position position="917"/>
    </location>
    <ligand>
        <name>Mn(2+)</name>
        <dbReference type="ChEBI" id="CHEBI:29035"/>
        <label>3</label>
    </ligand>
</feature>
<feature type="binding site" evidence="4">
    <location>
        <position position="917"/>
    </location>
    <ligand>
        <name>Mn(2+)</name>
        <dbReference type="ChEBI" id="CHEBI:29035"/>
        <label>4</label>
    </ligand>
</feature>
<feature type="binding site" evidence="4">
    <location>
        <position position="919"/>
    </location>
    <ligand>
        <name>Mg(2+)</name>
        <dbReference type="ChEBI" id="CHEBI:18420"/>
        <label>4</label>
    </ligand>
</feature>
<feature type="binding site" evidence="4">
    <location>
        <position position="919"/>
    </location>
    <ligand>
        <name>Mn(2+)</name>
        <dbReference type="ChEBI" id="CHEBI:29035"/>
        <label>4</label>
    </ligand>
</feature>
<gene>
    <name type="primary">arg4</name>
    <name type="ORF">SPBC215.08c</name>
</gene>
<sequence length="1160" mass="127480">MALWATSMRRAIPGISKAFLGSNRVLETAGVSQLSKHLLPQWSGVPHRKISASATNFNDKVKESNTPDANAYIRSGHIKAAEHEKVKKVVVVGSGGLSIGQAGEFDYSGAQAIKALRESSVHTILINPNIATIQSSHSLADEIYFLPVTAEYLTHLIERENPDGILLTFGGQTALNVGIQLDDMGVFARNHVKVLGTPISTLKTSEDRDLFAKALNEINIPIAESVAVSTVDEALQAAEKVSYPVIIRSAYSLGGLGSGFANNKEELQSMAAKSLSLTPQILVEKSLKGWKEVEYEVVRDAANNCITVCNMENFDPLGIHTGDSIVVAPSQTLSDEEYHMLRTAAIKIIRHLGVVGECNVQYALSPNSLEYRVIEVNARLSRSSALASKATGYPLAYTAAKIALGHTLPELPNAVTKTTTANFEPSLDYVVTKIPRWDLSKFQYVNREIGSSMKSVGEVMAVGRTFEESLQKALRQVDPSFLGFMAMPFKDLDNALSVPTDRRFFAVVEAMLNQGYSIDKIHDLTKIDKWFLSKLANMAKVYKELEEIGSLYGLNKEIMLRAKKTGFSDLQISKLVGASELDVRARRKRLDVHPWVKKIDTLAAEFPAHTNYLYTSYNASSHDIDFNEHGTMVLGSGVYRIGSSVEFDWCGVSCARTLRKLGHSTIMVNYNPETVSTDFDECERLYFEELSYERVMDIYEMETASGIVVSVGGQLPQNIALKLQETGAKVLGTDPLMIDSAEDRHKFSQILDKIGVDQPAWKELTSVAEASKFANAVGYPVLVRPSYVLSGAAMSVIRDESSLKDKLENASAVSPDHPVVITKFIEGARELDVDAVASKGKLLVHAVSEHVENAGVHSGDATIALPPYSLSEDILSRCKEIAEKVCKAFQITGPYNMQIILAQNPDKPDTPDLKVIECNLRASRSFPFVSKTLGVNFIDVATRSIIDQEVPAARDLMAVHRDYVCVKVPQFSWTRLAGADPYLGVEMSSTGEVACFGKDVKEAYWAALQSTQNFKIPLPGQGILLGGDRPELAGIAADLSKLGYKLYVANKDAAKLLQPTSAEVVEFPVKDKRALRAIFEKYNIRSVFNLASARGKNVLDQDYVMRRNAVDFNVTLINDVNCAKLFVESLKEKLPSVLSEKKEMPSEVKRWSEWIGSHDL</sequence>
<evidence type="ECO:0000250" key="1">
    <source>
        <dbReference type="UniProtKB" id="P00968"/>
    </source>
</evidence>
<evidence type="ECO:0000250" key="2">
    <source>
        <dbReference type="UniProtKB" id="P03965"/>
    </source>
</evidence>
<evidence type="ECO:0000250" key="3">
    <source>
        <dbReference type="UniProtKB" id="Q7SH52"/>
    </source>
</evidence>
<evidence type="ECO:0000255" key="4">
    <source>
        <dbReference type="PROSITE-ProRule" id="PRU00409"/>
    </source>
</evidence>
<evidence type="ECO:0000255" key="5">
    <source>
        <dbReference type="PROSITE-ProRule" id="PRU01202"/>
    </source>
</evidence>
<evidence type="ECO:0000269" key="6">
    <source>
    </source>
</evidence>
<evidence type="ECO:0000269" key="7">
    <source>
    </source>
</evidence>
<evidence type="ECO:0000269" key="8">
    <source ref="3"/>
</evidence>
<evidence type="ECO:0000305" key="9"/>
<evidence type="ECO:0000305" key="10">
    <source>
    </source>
</evidence>
<evidence type="ECO:0000305" key="11">
    <source ref="3"/>
</evidence>
<comment type="function">
    <text evidence="3 8">Large subunit of the arginine-specific carbamoyl phosphate synthase (CPSase). CPSase catalyzes the formation of carbamoyl phosphate from the ammonia moiety of glutamine, hydrogencarbonate, and phosphate donated by ATP, the first step of the arginine biosynthetic pathway (Ref.3). The large subunit (synthetase) binds the substrates ammonia (free or transferred from glutamine from the small subunit), hydrogencarbonate and ATP and carries out an ATP-coupled ligase reaction, activating hydrogencarbonate by forming carboxy phosphate which reacts with ammonia to form carbamoyl phosphate (By similarity).</text>
</comment>
<comment type="catalytic activity">
    <reaction evidence="3">
        <text>hydrogencarbonate + L-glutamine + 2 ATP + H2O = carbamoyl phosphate + L-glutamate + 2 ADP + phosphate + 2 H(+)</text>
        <dbReference type="Rhea" id="RHEA:18633"/>
        <dbReference type="ChEBI" id="CHEBI:15377"/>
        <dbReference type="ChEBI" id="CHEBI:15378"/>
        <dbReference type="ChEBI" id="CHEBI:17544"/>
        <dbReference type="ChEBI" id="CHEBI:29985"/>
        <dbReference type="ChEBI" id="CHEBI:30616"/>
        <dbReference type="ChEBI" id="CHEBI:43474"/>
        <dbReference type="ChEBI" id="CHEBI:58228"/>
        <dbReference type="ChEBI" id="CHEBI:58359"/>
        <dbReference type="ChEBI" id="CHEBI:456216"/>
        <dbReference type="EC" id="6.3.5.5"/>
    </reaction>
</comment>
<comment type="catalytic activity">
    <molecule>Carbamoyl phosphate synthase arginine-specific large chain, mitochondrial</molecule>
    <reaction evidence="3">
        <text>hydrogencarbonate + NH4(+) + 2 ATP = carbamoyl phosphate + 2 ADP + phosphate + 2 H(+)</text>
        <dbReference type="Rhea" id="RHEA:18029"/>
        <dbReference type="ChEBI" id="CHEBI:15378"/>
        <dbReference type="ChEBI" id="CHEBI:17544"/>
        <dbReference type="ChEBI" id="CHEBI:28938"/>
        <dbReference type="ChEBI" id="CHEBI:30616"/>
        <dbReference type="ChEBI" id="CHEBI:43474"/>
        <dbReference type="ChEBI" id="CHEBI:58228"/>
        <dbReference type="ChEBI" id="CHEBI:456216"/>
        <dbReference type="EC" id="6.3.4.16"/>
    </reaction>
</comment>
<comment type="cofactor">
    <cofactor evidence="4">
        <name>Mg(2+)</name>
        <dbReference type="ChEBI" id="CHEBI:18420"/>
    </cofactor>
    <cofactor evidence="4">
        <name>Mn(2+)</name>
        <dbReference type="ChEBI" id="CHEBI:29035"/>
    </cofactor>
    <text evidence="4">Binds 4 Mg(2+) or Mn(2+) ions per subunit.</text>
</comment>
<comment type="pathway">
    <text evidence="11">Amino-acid biosynthesis; L-arginine biosynthesis; carbamoyl phosphate from bicarbonate: step 1/1.</text>
</comment>
<comment type="subunit">
    <text evidence="3">Heterodimer composed of 2 chains; the small (or glutamine) chain promotes the hydrolysis of glutamine to ammonia, which is used by the large (or ammonia) chain to synthesize carbamoyl phosphate.</text>
</comment>
<comment type="subcellular location">
    <subcellularLocation>
        <location evidence="6 7">Mitochondrion</location>
    </subcellularLocation>
</comment>
<comment type="miscellaneous">
    <text evidence="10 11">In S.pombe, this enzyme is synthesized by two pathway-specific (arginine and pyrimidine) genes under separate control. One is linked to the arginine pathway and is designated CPSase A (arg5-arg4), it is localized to mitochondria and repressed by arginine. A second one, CPSase P, is part of a multifunctional protein (ura1) encoding 3 enzymatic activities of the pyrimidine pathway (GATase, CPSase, and ATCase); it is localized to the cytoplasm and feedback inhibited and repressed by pyrimidines. The carbamoyl phosphate synthesized by each synthase is channeled to its respective pathway, in contrast to Saccharomyces cerevisiae, in which the 2 synthases are localized to the cytoplasm and appear to contribute to the formation of a single cellular pool of carbamoyl phosphate.</text>
</comment>
<comment type="similarity">
    <text evidence="9">Belongs to the CarB family.</text>
</comment>
<keyword id="KW-0028">Amino-acid biosynthesis</keyword>
<keyword id="KW-0055">Arginine biosynthesis</keyword>
<keyword id="KW-0067">ATP-binding</keyword>
<keyword id="KW-0436">Ligase</keyword>
<keyword id="KW-0464">Manganese</keyword>
<keyword id="KW-0479">Metal-binding</keyword>
<keyword id="KW-0496">Mitochondrion</keyword>
<keyword id="KW-0547">Nucleotide-binding</keyword>
<keyword id="KW-1185">Reference proteome</keyword>
<keyword id="KW-0677">Repeat</keyword>
<reference key="1">
    <citation type="journal article" date="2002" name="Nature">
        <title>The genome sequence of Schizosaccharomyces pombe.</title>
        <authorList>
            <person name="Wood V."/>
            <person name="Gwilliam R."/>
            <person name="Rajandream M.A."/>
            <person name="Lyne M.H."/>
            <person name="Lyne R."/>
            <person name="Stewart A."/>
            <person name="Sgouros J.G."/>
            <person name="Peat N."/>
            <person name="Hayles J."/>
            <person name="Baker S.G."/>
            <person name="Basham D."/>
            <person name="Bowman S."/>
            <person name="Brooks K."/>
            <person name="Brown D."/>
            <person name="Brown S."/>
            <person name="Chillingworth T."/>
            <person name="Churcher C.M."/>
            <person name="Collins M."/>
            <person name="Connor R."/>
            <person name="Cronin A."/>
            <person name="Davis P."/>
            <person name="Feltwell T."/>
            <person name="Fraser A."/>
            <person name="Gentles S."/>
            <person name="Goble A."/>
            <person name="Hamlin N."/>
            <person name="Harris D.E."/>
            <person name="Hidalgo J."/>
            <person name="Hodgson G."/>
            <person name="Holroyd S."/>
            <person name="Hornsby T."/>
            <person name="Howarth S."/>
            <person name="Huckle E.J."/>
            <person name="Hunt S."/>
            <person name="Jagels K."/>
            <person name="James K.D."/>
            <person name="Jones L."/>
            <person name="Jones M."/>
            <person name="Leather S."/>
            <person name="McDonald S."/>
            <person name="McLean J."/>
            <person name="Mooney P."/>
            <person name="Moule S."/>
            <person name="Mungall K.L."/>
            <person name="Murphy L.D."/>
            <person name="Niblett D."/>
            <person name="Odell C."/>
            <person name="Oliver K."/>
            <person name="O'Neil S."/>
            <person name="Pearson D."/>
            <person name="Quail M.A."/>
            <person name="Rabbinowitsch E."/>
            <person name="Rutherford K.M."/>
            <person name="Rutter S."/>
            <person name="Saunders D."/>
            <person name="Seeger K."/>
            <person name="Sharp S."/>
            <person name="Skelton J."/>
            <person name="Simmonds M.N."/>
            <person name="Squares R."/>
            <person name="Squares S."/>
            <person name="Stevens K."/>
            <person name="Taylor K."/>
            <person name="Taylor R.G."/>
            <person name="Tivey A."/>
            <person name="Walsh S.V."/>
            <person name="Warren T."/>
            <person name="Whitehead S."/>
            <person name="Woodward J.R."/>
            <person name="Volckaert G."/>
            <person name="Aert R."/>
            <person name="Robben J."/>
            <person name="Grymonprez B."/>
            <person name="Weltjens I."/>
            <person name="Vanstreels E."/>
            <person name="Rieger M."/>
            <person name="Schaefer M."/>
            <person name="Mueller-Auer S."/>
            <person name="Gabel C."/>
            <person name="Fuchs M."/>
            <person name="Duesterhoeft A."/>
            <person name="Fritzc C."/>
            <person name="Holzer E."/>
            <person name="Moestl D."/>
            <person name="Hilbert H."/>
            <person name="Borzym K."/>
            <person name="Langer I."/>
            <person name="Beck A."/>
            <person name="Lehrach H."/>
            <person name="Reinhardt R."/>
            <person name="Pohl T.M."/>
            <person name="Eger P."/>
            <person name="Zimmermann W."/>
            <person name="Wedler H."/>
            <person name="Wambutt R."/>
            <person name="Purnelle B."/>
            <person name="Goffeau A."/>
            <person name="Cadieu E."/>
            <person name="Dreano S."/>
            <person name="Gloux S."/>
            <person name="Lelaure V."/>
            <person name="Mottier S."/>
            <person name="Galibert F."/>
            <person name="Aves S.J."/>
            <person name="Xiang Z."/>
            <person name="Hunt C."/>
            <person name="Moore K."/>
            <person name="Hurst S.M."/>
            <person name="Lucas M."/>
            <person name="Rochet M."/>
            <person name="Gaillardin C."/>
            <person name="Tallada V.A."/>
            <person name="Garzon A."/>
            <person name="Thode G."/>
            <person name="Daga R.R."/>
            <person name="Cruzado L."/>
            <person name="Jimenez J."/>
            <person name="Sanchez M."/>
            <person name="del Rey F."/>
            <person name="Benito J."/>
            <person name="Dominguez A."/>
            <person name="Revuelta J.L."/>
            <person name="Moreno S."/>
            <person name="Armstrong J."/>
            <person name="Forsburg S.L."/>
            <person name="Cerutti L."/>
            <person name="Lowe T."/>
            <person name="McCombie W.R."/>
            <person name="Paulsen I."/>
            <person name="Potashkin J."/>
            <person name="Shpakovski G.V."/>
            <person name="Ussery D."/>
            <person name="Barrell B.G."/>
            <person name="Nurse P."/>
        </authorList>
    </citation>
    <scope>NUCLEOTIDE SEQUENCE [LARGE SCALE GENOMIC DNA]</scope>
    <source>
        <strain>972 / ATCC 24843</strain>
    </source>
</reference>
<reference key="2">
    <citation type="journal article" date="1977" name="Eur. J. Biochem.">
        <title>Change in location of ornithine carbamoyltransferase and carbamoylphosphate synthetase among yeasts in relation to the arginase/ornithine carbamoyltransferase regulatory complex and the energy status of the cells.</title>
        <authorList>
            <person name="Urrestarazu L.A."/>
            <person name="Vissers S."/>
            <person name="Wiame J.M."/>
        </authorList>
    </citation>
    <scope>SUBCELLULAR LOCATION</scope>
</reference>
<reference key="3">
    <citation type="journal article" date="1985" name="Curr. Genet.">
        <title>Genetical evidence of carbamoylphosphate compartmentation in Schizosaccharomyces pombe and Schizosaccharomyces japonicus.</title>
        <authorList>
            <person name="Vissers S."/>
            <person name="Thuriaux P."/>
        </authorList>
    </citation>
    <scope>FUNCTION</scope>
    <scope>PATHWAY</scope>
</reference>
<reference key="4">
    <citation type="journal article" date="2006" name="Nat. Biotechnol.">
        <title>ORFeome cloning and global analysis of protein localization in the fission yeast Schizosaccharomyces pombe.</title>
        <authorList>
            <person name="Matsuyama A."/>
            <person name="Arai R."/>
            <person name="Yashiroda Y."/>
            <person name="Shirai A."/>
            <person name="Kamata A."/>
            <person name="Sekido S."/>
            <person name="Kobayashi Y."/>
            <person name="Hashimoto A."/>
            <person name="Hamamoto M."/>
            <person name="Hiraoka Y."/>
            <person name="Horinouchi S."/>
            <person name="Yoshida M."/>
        </authorList>
    </citation>
    <scope>SUBCELLULAR LOCATION [LARGE SCALE ANALYSIS]</scope>
</reference>
<accession>O94313</accession>
<dbReference type="EC" id="6.3.4.16" evidence="2"/>
<dbReference type="EC" id="6.3.5.5" evidence="3"/>
<dbReference type="EMBL" id="CU329671">
    <property type="protein sequence ID" value="CAA22122.1"/>
    <property type="molecule type" value="Genomic_DNA"/>
</dbReference>
<dbReference type="PIR" id="T39898">
    <property type="entry name" value="T39898"/>
</dbReference>
<dbReference type="RefSeq" id="NP_596685.1">
    <property type="nucleotide sequence ID" value="NM_001022608.2"/>
</dbReference>
<dbReference type="SMR" id="O94313"/>
<dbReference type="BioGRID" id="277252">
    <property type="interactions" value="7"/>
</dbReference>
<dbReference type="DIP" id="DIP-59124N"/>
<dbReference type="FunCoup" id="O94313">
    <property type="interactions" value="539"/>
</dbReference>
<dbReference type="IntAct" id="O94313">
    <property type="interactions" value="1"/>
</dbReference>
<dbReference type="STRING" id="284812.O94313"/>
<dbReference type="iPTMnet" id="O94313"/>
<dbReference type="PaxDb" id="4896-SPBC215.08c.1"/>
<dbReference type="EnsemblFungi" id="SPBC215.08c.1">
    <property type="protein sequence ID" value="SPBC215.08c.1:pep"/>
    <property type="gene ID" value="SPBC215.08c"/>
</dbReference>
<dbReference type="GeneID" id="2540729"/>
<dbReference type="KEGG" id="spo:2540729"/>
<dbReference type="PomBase" id="SPBC215.08c">
    <property type="gene designation" value="arg4"/>
</dbReference>
<dbReference type="VEuPathDB" id="FungiDB:SPBC215.08c"/>
<dbReference type="eggNOG" id="KOG0370">
    <property type="taxonomic scope" value="Eukaryota"/>
</dbReference>
<dbReference type="HOGENOM" id="CLU_000513_1_3_1"/>
<dbReference type="InParanoid" id="O94313"/>
<dbReference type="OMA" id="FPFNKFP"/>
<dbReference type="PhylomeDB" id="O94313"/>
<dbReference type="Reactome" id="R-SPO-70635">
    <property type="pathway name" value="Urea cycle"/>
</dbReference>
<dbReference type="UniPathway" id="UPA00068">
    <property type="reaction ID" value="UER00171"/>
</dbReference>
<dbReference type="PRO" id="PR:O94313"/>
<dbReference type="Proteomes" id="UP000002485">
    <property type="component" value="Chromosome II"/>
</dbReference>
<dbReference type="GO" id="GO:0005951">
    <property type="term" value="C:carbamoyl-phosphate synthase complex"/>
    <property type="evidence" value="ECO:0000266"/>
    <property type="project" value="PomBase"/>
</dbReference>
<dbReference type="GO" id="GO:0005737">
    <property type="term" value="C:cytoplasm"/>
    <property type="evidence" value="ECO:0000318"/>
    <property type="project" value="GO_Central"/>
</dbReference>
<dbReference type="GO" id="GO:0005739">
    <property type="term" value="C:mitochondrion"/>
    <property type="evidence" value="ECO:0007005"/>
    <property type="project" value="PomBase"/>
</dbReference>
<dbReference type="GO" id="GO:0005524">
    <property type="term" value="F:ATP binding"/>
    <property type="evidence" value="ECO:0000255"/>
    <property type="project" value="PomBase"/>
</dbReference>
<dbReference type="GO" id="GO:0004087">
    <property type="term" value="F:carbamoyl-phosphate synthase (ammonia) activity"/>
    <property type="evidence" value="ECO:0000318"/>
    <property type="project" value="GO_Central"/>
</dbReference>
<dbReference type="GO" id="GO:0004088">
    <property type="term" value="F:carbamoyl-phosphate synthase (glutamine-hydrolyzing) activity"/>
    <property type="evidence" value="ECO:0007669"/>
    <property type="project" value="UniProtKB-EC"/>
</dbReference>
<dbReference type="GO" id="GO:0046872">
    <property type="term" value="F:metal ion binding"/>
    <property type="evidence" value="ECO:0007669"/>
    <property type="project" value="UniProtKB-KW"/>
</dbReference>
<dbReference type="GO" id="GO:0042450">
    <property type="term" value="P:arginine biosynthetic process via ornithine"/>
    <property type="evidence" value="ECO:0000269"/>
    <property type="project" value="PomBase"/>
</dbReference>
<dbReference type="GO" id="GO:0006526">
    <property type="term" value="P:L-arginine biosynthetic process"/>
    <property type="evidence" value="ECO:0000269"/>
    <property type="project" value="PomBase"/>
</dbReference>
<dbReference type="GO" id="GO:0000050">
    <property type="term" value="P:urea cycle"/>
    <property type="evidence" value="ECO:0000305"/>
    <property type="project" value="PomBase"/>
</dbReference>
<dbReference type="CDD" id="cd01423">
    <property type="entry name" value="MGS_CPS_I_III"/>
    <property type="match status" value="1"/>
</dbReference>
<dbReference type="FunFam" id="3.30.470.20:FF:000004">
    <property type="entry name" value="Carbamoyl-phosphate synthase (glutamine-hydrolyzing)"/>
    <property type="match status" value="1"/>
</dbReference>
<dbReference type="FunFam" id="3.40.50.1380:FF:000015">
    <property type="entry name" value="Carbamoyl-phosphate synthase arginine-specific large chain"/>
    <property type="match status" value="1"/>
</dbReference>
<dbReference type="FunFam" id="1.10.1030.10:FF:000001">
    <property type="entry name" value="Carbamoyl-phosphate synthase large chain"/>
    <property type="match status" value="1"/>
</dbReference>
<dbReference type="FunFam" id="3.30.1490.20:FF:000001">
    <property type="entry name" value="Carbamoyl-phosphate synthase large chain"/>
    <property type="match status" value="1"/>
</dbReference>
<dbReference type="FunFam" id="3.30.470.20:FF:000001">
    <property type="entry name" value="Carbamoyl-phosphate synthase large chain"/>
    <property type="match status" value="1"/>
</dbReference>
<dbReference type="FunFam" id="3.40.50.20:FF:000001">
    <property type="entry name" value="Carbamoyl-phosphate synthase large chain"/>
    <property type="match status" value="1"/>
</dbReference>
<dbReference type="FunFam" id="3.40.50.20:FF:000002">
    <property type="entry name" value="Carbamoyl-phosphate synthase large chain"/>
    <property type="match status" value="1"/>
</dbReference>
<dbReference type="Gene3D" id="3.40.50.20">
    <property type="match status" value="2"/>
</dbReference>
<dbReference type="Gene3D" id="3.30.1490.20">
    <property type="entry name" value="ATP-grasp fold, A domain"/>
    <property type="match status" value="1"/>
</dbReference>
<dbReference type="Gene3D" id="3.30.470.20">
    <property type="entry name" value="ATP-grasp fold, B domain"/>
    <property type="match status" value="2"/>
</dbReference>
<dbReference type="Gene3D" id="1.10.1030.10">
    <property type="entry name" value="Carbamoyl-phosphate synthetase, large subunit oligomerisation domain"/>
    <property type="match status" value="1"/>
</dbReference>
<dbReference type="Gene3D" id="3.40.50.1380">
    <property type="entry name" value="Methylglyoxal synthase-like domain"/>
    <property type="match status" value="1"/>
</dbReference>
<dbReference type="InterPro" id="IPR011761">
    <property type="entry name" value="ATP-grasp"/>
</dbReference>
<dbReference type="InterPro" id="IPR013815">
    <property type="entry name" value="ATP_grasp_subdomain_1"/>
</dbReference>
<dbReference type="InterPro" id="IPR006275">
    <property type="entry name" value="CarbamoylP_synth_lsu"/>
</dbReference>
<dbReference type="InterPro" id="IPR005480">
    <property type="entry name" value="CarbamoylP_synth_lsu_oligo"/>
</dbReference>
<dbReference type="InterPro" id="IPR036897">
    <property type="entry name" value="CarbamoylP_synth_lsu_oligo_sf"/>
</dbReference>
<dbReference type="InterPro" id="IPR005479">
    <property type="entry name" value="CbamoylP_synth_lsu-like_ATP-bd"/>
</dbReference>
<dbReference type="InterPro" id="IPR005483">
    <property type="entry name" value="CbamoylP_synth_lsu_CPSase_dom"/>
</dbReference>
<dbReference type="InterPro" id="IPR011607">
    <property type="entry name" value="MGS-like_dom"/>
</dbReference>
<dbReference type="InterPro" id="IPR036914">
    <property type="entry name" value="MGS-like_dom_sf"/>
</dbReference>
<dbReference type="InterPro" id="IPR016185">
    <property type="entry name" value="PreATP-grasp_dom_sf"/>
</dbReference>
<dbReference type="NCBIfam" id="TIGR01369">
    <property type="entry name" value="CPSaseII_lrg"/>
    <property type="match status" value="1"/>
</dbReference>
<dbReference type="NCBIfam" id="NF003671">
    <property type="entry name" value="PRK05294.1"/>
    <property type="match status" value="1"/>
</dbReference>
<dbReference type="NCBIfam" id="NF009455">
    <property type="entry name" value="PRK12815.1"/>
    <property type="match status" value="1"/>
</dbReference>
<dbReference type="PANTHER" id="PTHR11405:SF53">
    <property type="entry name" value="CARBAMOYL-PHOSPHATE SYNTHASE [AMMONIA], MITOCHONDRIAL"/>
    <property type="match status" value="1"/>
</dbReference>
<dbReference type="PANTHER" id="PTHR11405">
    <property type="entry name" value="CARBAMOYLTRANSFERASE FAMILY MEMBER"/>
    <property type="match status" value="1"/>
</dbReference>
<dbReference type="Pfam" id="PF02786">
    <property type="entry name" value="CPSase_L_D2"/>
    <property type="match status" value="2"/>
</dbReference>
<dbReference type="Pfam" id="PF02787">
    <property type="entry name" value="CPSase_L_D3"/>
    <property type="match status" value="1"/>
</dbReference>
<dbReference type="PRINTS" id="PR00098">
    <property type="entry name" value="CPSASE"/>
</dbReference>
<dbReference type="SMART" id="SM01096">
    <property type="entry name" value="CPSase_L_D3"/>
    <property type="match status" value="1"/>
</dbReference>
<dbReference type="SUPFAM" id="SSF48108">
    <property type="entry name" value="Carbamoyl phosphate synthetase, large subunit connection domain"/>
    <property type="match status" value="1"/>
</dbReference>
<dbReference type="SUPFAM" id="SSF56059">
    <property type="entry name" value="Glutathione synthetase ATP-binding domain-like"/>
    <property type="match status" value="2"/>
</dbReference>
<dbReference type="SUPFAM" id="SSF52335">
    <property type="entry name" value="Methylglyoxal synthase-like"/>
    <property type="match status" value="1"/>
</dbReference>
<dbReference type="SUPFAM" id="SSF52440">
    <property type="entry name" value="PreATP-grasp domain"/>
    <property type="match status" value="2"/>
</dbReference>
<dbReference type="PROSITE" id="PS50975">
    <property type="entry name" value="ATP_GRASP"/>
    <property type="match status" value="2"/>
</dbReference>
<dbReference type="PROSITE" id="PS00866">
    <property type="entry name" value="CPSASE_1"/>
    <property type="match status" value="2"/>
</dbReference>
<dbReference type="PROSITE" id="PS00867">
    <property type="entry name" value="CPSASE_2"/>
    <property type="match status" value="2"/>
</dbReference>
<dbReference type="PROSITE" id="PS51855">
    <property type="entry name" value="MGS"/>
    <property type="match status" value="1"/>
</dbReference>
<organism>
    <name type="scientific">Schizosaccharomyces pombe (strain 972 / ATCC 24843)</name>
    <name type="common">Fission yeast</name>
    <dbReference type="NCBI Taxonomy" id="284812"/>
    <lineage>
        <taxon>Eukaryota</taxon>
        <taxon>Fungi</taxon>
        <taxon>Dikarya</taxon>
        <taxon>Ascomycota</taxon>
        <taxon>Taphrinomycotina</taxon>
        <taxon>Schizosaccharomycetes</taxon>
        <taxon>Schizosaccharomycetales</taxon>
        <taxon>Schizosaccharomycetaceae</taxon>
        <taxon>Schizosaccharomyces</taxon>
    </lineage>
</organism>